<evidence type="ECO:0000250" key="1">
    <source>
        <dbReference type="UniProtKB" id="P60010"/>
    </source>
</evidence>
<evidence type="ECO:0000305" key="2"/>
<dbReference type="EC" id="3.6.4.-" evidence="1"/>
<dbReference type="EMBL" id="X07999">
    <property type="protein sequence ID" value="CAA30804.1"/>
    <property type="molecule type" value="Genomic_DNA"/>
</dbReference>
<dbReference type="PIR" id="S03109">
    <property type="entry name" value="S03109"/>
</dbReference>
<dbReference type="SMR" id="P10982"/>
<dbReference type="GO" id="GO:0005737">
    <property type="term" value="C:cytoplasm"/>
    <property type="evidence" value="ECO:0007669"/>
    <property type="project" value="UniProtKB-KW"/>
</dbReference>
<dbReference type="GO" id="GO:0005856">
    <property type="term" value="C:cytoskeleton"/>
    <property type="evidence" value="ECO:0007669"/>
    <property type="project" value="UniProtKB-SubCell"/>
</dbReference>
<dbReference type="GO" id="GO:0005524">
    <property type="term" value="F:ATP binding"/>
    <property type="evidence" value="ECO:0007669"/>
    <property type="project" value="UniProtKB-KW"/>
</dbReference>
<dbReference type="GO" id="GO:0016787">
    <property type="term" value="F:hydrolase activity"/>
    <property type="evidence" value="ECO:0007669"/>
    <property type="project" value="UniProtKB-KW"/>
</dbReference>
<dbReference type="FunFam" id="2.30.36.70:FF:000001">
    <property type="entry name" value="Actin, alpha skeletal muscle"/>
    <property type="match status" value="1"/>
</dbReference>
<dbReference type="FunFam" id="3.30.420.40:FF:000291">
    <property type="entry name" value="Actin, alpha skeletal muscle"/>
    <property type="match status" value="1"/>
</dbReference>
<dbReference type="Gene3D" id="3.30.420.40">
    <property type="match status" value="1"/>
</dbReference>
<dbReference type="Gene3D" id="2.30.36.70">
    <property type="entry name" value="Actin, Chain A, domain 2"/>
    <property type="match status" value="1"/>
</dbReference>
<dbReference type="InterPro" id="IPR004000">
    <property type="entry name" value="Actin"/>
</dbReference>
<dbReference type="InterPro" id="IPR020902">
    <property type="entry name" value="Actin/actin-like_CS"/>
</dbReference>
<dbReference type="InterPro" id="IPR004001">
    <property type="entry name" value="Actin_CS"/>
</dbReference>
<dbReference type="InterPro" id="IPR043129">
    <property type="entry name" value="ATPase_NBD"/>
</dbReference>
<dbReference type="PANTHER" id="PTHR11937">
    <property type="entry name" value="ACTIN"/>
    <property type="match status" value="1"/>
</dbReference>
<dbReference type="Pfam" id="PF00022">
    <property type="entry name" value="Actin"/>
    <property type="match status" value="1"/>
</dbReference>
<dbReference type="PRINTS" id="PR00190">
    <property type="entry name" value="ACTIN"/>
</dbReference>
<dbReference type="SMART" id="SM00268">
    <property type="entry name" value="ACTIN"/>
    <property type="match status" value="1"/>
</dbReference>
<dbReference type="SUPFAM" id="SSF53067">
    <property type="entry name" value="Actin-like ATPase domain"/>
    <property type="match status" value="1"/>
</dbReference>
<dbReference type="PROSITE" id="PS00406">
    <property type="entry name" value="ACTINS_1"/>
    <property type="match status" value="1"/>
</dbReference>
<dbReference type="PROSITE" id="PS01132">
    <property type="entry name" value="ACTINS_ACT_LIKE"/>
    <property type="match status" value="1"/>
</dbReference>
<feature type="chain" id="PRO_0000088882" description="Actin-1">
    <location>
        <begin position="1"/>
        <end position="140" status="greater than"/>
    </location>
</feature>
<feature type="non-terminal residue">
    <location>
        <position position="140"/>
    </location>
</feature>
<keyword id="KW-0067">ATP-binding</keyword>
<keyword id="KW-0963">Cytoplasm</keyword>
<keyword id="KW-0206">Cytoskeleton</keyword>
<keyword id="KW-0378">Hydrolase</keyword>
<keyword id="KW-0547">Nucleotide-binding</keyword>
<sequence>MSMEEEIAALVIDNGSGMCKAGFAGDDAPRAVFPSIVGRPRHQGIMVGMGQKDSYVGDEAQSKRGILTLRYPIEHGIVTNWDDMEKIWHHTFYNELRVAPEEHPVLLTEAPLNPKSNREKMTQIMFETFNAPAFYVSIQA</sequence>
<reference key="1">
    <citation type="submission" date="1988-06" db="EMBL/GenBank/DDBJ databases">
        <authorList>
            <person name="Burmester A."/>
            <person name="Weigel C."/>
            <person name="Woestemeyer J."/>
        </authorList>
    </citation>
    <scope>NUCLEOTIDE SEQUENCE [GENOMIC DNA]</scope>
    <source>
        <strain>CBS 101.48</strain>
    </source>
</reference>
<accession>P10982</accession>
<gene>
    <name type="primary">ACT1</name>
</gene>
<comment type="function">
    <text>Actins are highly conserved proteins that are involved in various types of cell motility and are ubiquitously expressed in all eukaryotic cells.</text>
</comment>
<comment type="catalytic activity">
    <reaction evidence="1">
        <text>ATP + H2O = ADP + phosphate + H(+)</text>
        <dbReference type="Rhea" id="RHEA:13065"/>
        <dbReference type="ChEBI" id="CHEBI:15377"/>
        <dbReference type="ChEBI" id="CHEBI:15378"/>
        <dbReference type="ChEBI" id="CHEBI:30616"/>
        <dbReference type="ChEBI" id="CHEBI:43474"/>
        <dbReference type="ChEBI" id="CHEBI:456216"/>
    </reaction>
</comment>
<comment type="subcellular location">
    <subcellularLocation>
        <location>Cytoplasm</location>
        <location>Cytoskeleton</location>
    </subcellularLocation>
</comment>
<comment type="similarity">
    <text evidence="2">Belongs to the actin family.</text>
</comment>
<organism>
    <name type="scientific">Absidia glauca</name>
    <name type="common">Pin mould</name>
    <dbReference type="NCBI Taxonomy" id="4829"/>
    <lineage>
        <taxon>Eukaryota</taxon>
        <taxon>Fungi</taxon>
        <taxon>Fungi incertae sedis</taxon>
        <taxon>Mucoromycota</taxon>
        <taxon>Mucoromycotina</taxon>
        <taxon>Mucoromycetes</taxon>
        <taxon>Mucorales</taxon>
        <taxon>Cunninghamellaceae</taxon>
        <taxon>Absidia</taxon>
    </lineage>
</organism>
<protein>
    <recommendedName>
        <fullName>Actin-1</fullName>
        <ecNumber evidence="1">3.6.4.-</ecNumber>
    </recommendedName>
</protein>
<proteinExistence type="inferred from homology"/>
<name>ACT1_ABSGL</name>